<evidence type="ECO:0000255" key="1">
    <source>
        <dbReference type="HAMAP-Rule" id="MF_00184"/>
    </source>
</evidence>
<evidence type="ECO:0000255" key="2">
    <source>
        <dbReference type="PROSITE-ProRule" id="PRU01228"/>
    </source>
</evidence>
<keyword id="KW-0030">Aminoacyl-tRNA synthetase</keyword>
<keyword id="KW-0067">ATP-binding</keyword>
<keyword id="KW-0963">Cytoplasm</keyword>
<keyword id="KW-0436">Ligase</keyword>
<keyword id="KW-0479">Metal-binding</keyword>
<keyword id="KW-0547">Nucleotide-binding</keyword>
<keyword id="KW-0648">Protein biosynthesis</keyword>
<keyword id="KW-1185">Reference proteome</keyword>
<keyword id="KW-0694">RNA-binding</keyword>
<keyword id="KW-0820">tRNA-binding</keyword>
<keyword id="KW-0862">Zinc</keyword>
<gene>
    <name evidence="1" type="primary">thrS</name>
    <name type="ordered locus">Lxx10690</name>
</gene>
<protein>
    <recommendedName>
        <fullName evidence="1">Threonine--tRNA ligase</fullName>
        <ecNumber evidence="1">6.1.1.3</ecNumber>
    </recommendedName>
    <alternativeName>
        <fullName evidence="1">Threonyl-tRNA synthetase</fullName>
        <shortName evidence="1">ThrRS</shortName>
    </alternativeName>
</protein>
<feature type="chain" id="PRO_0000100999" description="Threonine--tRNA ligase">
    <location>
        <begin position="1"/>
        <end position="695"/>
    </location>
</feature>
<feature type="domain" description="TGS" evidence="2">
    <location>
        <begin position="1"/>
        <end position="76"/>
    </location>
</feature>
<feature type="region of interest" description="Catalytic" evidence="1">
    <location>
        <begin position="279"/>
        <end position="585"/>
    </location>
</feature>
<feature type="binding site" evidence="1">
    <location>
        <position position="384"/>
    </location>
    <ligand>
        <name>Zn(2+)</name>
        <dbReference type="ChEBI" id="CHEBI:29105"/>
    </ligand>
</feature>
<feature type="binding site" evidence="1">
    <location>
        <position position="435"/>
    </location>
    <ligand>
        <name>Zn(2+)</name>
        <dbReference type="ChEBI" id="CHEBI:29105"/>
    </ligand>
</feature>
<feature type="binding site" evidence="1">
    <location>
        <position position="562"/>
    </location>
    <ligand>
        <name>Zn(2+)</name>
        <dbReference type="ChEBI" id="CHEBI:29105"/>
    </ligand>
</feature>
<reference key="1">
    <citation type="journal article" date="2004" name="Mol. Plant Microbe Interact.">
        <title>The genome sequence of the Gram-positive sugarcane pathogen Leifsonia xyli subsp. xyli.</title>
        <authorList>
            <person name="Monteiro-Vitorello C.B."/>
            <person name="Camargo L.E.A."/>
            <person name="Van Sluys M.A."/>
            <person name="Kitajima J.P."/>
            <person name="Truffi D."/>
            <person name="do Amaral A.M."/>
            <person name="Harakava R."/>
            <person name="de Oliveira J.C.F."/>
            <person name="Wood D."/>
            <person name="de Oliveira M.C."/>
            <person name="Miyaki C.Y."/>
            <person name="Takita M.A."/>
            <person name="da Silva A.C.R."/>
            <person name="Furlan L.R."/>
            <person name="Carraro D.M."/>
            <person name="Camarotte G."/>
            <person name="Almeida N.F. Jr."/>
            <person name="Carrer H."/>
            <person name="Coutinho L.L."/>
            <person name="El-Dorry H.A."/>
            <person name="Ferro M.I.T."/>
            <person name="Gagliardi P.R."/>
            <person name="Giglioti E."/>
            <person name="Goldman M.H.S."/>
            <person name="Goldman G.H."/>
            <person name="Kimura E.T."/>
            <person name="Ferro E.S."/>
            <person name="Kuramae E.E."/>
            <person name="Lemos E.G.M."/>
            <person name="Lemos M.V.F."/>
            <person name="Mauro S.M.Z."/>
            <person name="Machado M.A."/>
            <person name="Marino C.L."/>
            <person name="Menck C.F."/>
            <person name="Nunes L.R."/>
            <person name="Oliveira R.C."/>
            <person name="Pereira G.G."/>
            <person name="Siqueira W."/>
            <person name="de Souza A.A."/>
            <person name="Tsai S.M."/>
            <person name="Zanca A.S."/>
            <person name="Simpson A.J.G."/>
            <person name="Brumbley S.M."/>
            <person name="Setubal J.C."/>
        </authorList>
    </citation>
    <scope>NUCLEOTIDE SEQUENCE [LARGE SCALE GENOMIC DNA]</scope>
    <source>
        <strain>CTCB07</strain>
    </source>
</reference>
<sequence length="695" mass="78060">MPRIPSPPQAGLRARAARAFRLELTHPFRHDLLGVDQVADGFEFFTDRSVVAMRVNGELKDLATIVTTTDVVEPVTIYSPDGLAILRHSTAHVLAQAVQTVNPEAKLGIGPPIADGFYYDFDVAEPFTPEDLKALDKEMSRIQRAGQRFVRRVVTDEEARAELAGEPYKLELIGLKGSDAESAEVGGEESVEVGSGELTIYDNVDPKTGETIWKDLCRGPHLPNTRMIGNGWALTRVAAAYWRGSEKNPQLQRIYGTAWPSKDELRAYQTRMEEAAKRDHRKLGVELDLFSFPDEIGSGLAVFHPKGGIIRKEIEDYMRDRLIANGYEMVNTPHITKGHLFETSQHLNWYREGMFPPMHLDEERDAEGNVTRQGQDYYLKPMNCPMHNLIFRSRGRSYRELPLRLSEFGTVYRYEKSGTLSGLTRVRGLTQDDAHIYVTEEQIRDEFARQLQFVLETLRGYGLTDFYLELSTKDPEKYVGSDESWETATETLREVAVESGLELVDDPGGAAFYGPKISVQARDAIGRTWQLSTVQLDFNQPELFELEYNAADGTRKQPAMIHRALLGSIERFFAILLEHHAGAFPVWLAPTQVVGIPVADAYGPFLDDVIAQLRARGVRAEVDHSDDRMQKKIRTHTKAKVPFQLIVGEEDASAGTVSFRFRDGTQLNGVAVDEAIERIVASIQTHELVDTAWPA</sequence>
<organism>
    <name type="scientific">Leifsonia xyli subsp. xyli (strain CTCB07)</name>
    <dbReference type="NCBI Taxonomy" id="281090"/>
    <lineage>
        <taxon>Bacteria</taxon>
        <taxon>Bacillati</taxon>
        <taxon>Actinomycetota</taxon>
        <taxon>Actinomycetes</taxon>
        <taxon>Micrococcales</taxon>
        <taxon>Microbacteriaceae</taxon>
        <taxon>Leifsonia</taxon>
    </lineage>
</organism>
<accession>Q6AFC3</accession>
<proteinExistence type="inferred from homology"/>
<name>SYT_LEIXX</name>
<dbReference type="EC" id="6.1.1.3" evidence="1"/>
<dbReference type="EMBL" id="AE016822">
    <property type="protein sequence ID" value="AAT88922.1"/>
    <property type="molecule type" value="Genomic_DNA"/>
</dbReference>
<dbReference type="SMR" id="Q6AFC3"/>
<dbReference type="STRING" id="281090.Lxx10690"/>
<dbReference type="KEGG" id="lxx:Lxx10690"/>
<dbReference type="eggNOG" id="COG0441">
    <property type="taxonomic scope" value="Bacteria"/>
</dbReference>
<dbReference type="HOGENOM" id="CLU_008554_0_1_11"/>
<dbReference type="Proteomes" id="UP000001306">
    <property type="component" value="Chromosome"/>
</dbReference>
<dbReference type="GO" id="GO:0005737">
    <property type="term" value="C:cytoplasm"/>
    <property type="evidence" value="ECO:0007669"/>
    <property type="project" value="UniProtKB-SubCell"/>
</dbReference>
<dbReference type="GO" id="GO:0005524">
    <property type="term" value="F:ATP binding"/>
    <property type="evidence" value="ECO:0007669"/>
    <property type="project" value="UniProtKB-UniRule"/>
</dbReference>
<dbReference type="GO" id="GO:0046872">
    <property type="term" value="F:metal ion binding"/>
    <property type="evidence" value="ECO:0007669"/>
    <property type="project" value="UniProtKB-KW"/>
</dbReference>
<dbReference type="GO" id="GO:0004829">
    <property type="term" value="F:threonine-tRNA ligase activity"/>
    <property type="evidence" value="ECO:0007669"/>
    <property type="project" value="UniProtKB-UniRule"/>
</dbReference>
<dbReference type="GO" id="GO:0000049">
    <property type="term" value="F:tRNA binding"/>
    <property type="evidence" value="ECO:0007669"/>
    <property type="project" value="UniProtKB-KW"/>
</dbReference>
<dbReference type="GO" id="GO:0006435">
    <property type="term" value="P:threonyl-tRNA aminoacylation"/>
    <property type="evidence" value="ECO:0007669"/>
    <property type="project" value="UniProtKB-UniRule"/>
</dbReference>
<dbReference type="CDD" id="cd00860">
    <property type="entry name" value="ThrRS_anticodon"/>
    <property type="match status" value="1"/>
</dbReference>
<dbReference type="CDD" id="cd00771">
    <property type="entry name" value="ThrRS_core"/>
    <property type="match status" value="1"/>
</dbReference>
<dbReference type="FunFam" id="3.30.54.20:FF:000003">
    <property type="entry name" value="Threonine--tRNA ligase"/>
    <property type="match status" value="1"/>
</dbReference>
<dbReference type="FunFam" id="3.30.930.10:FF:000019">
    <property type="entry name" value="Threonine--tRNA ligase"/>
    <property type="match status" value="1"/>
</dbReference>
<dbReference type="FunFam" id="3.40.50.800:FF:000001">
    <property type="entry name" value="Threonine--tRNA ligase"/>
    <property type="match status" value="1"/>
</dbReference>
<dbReference type="Gene3D" id="3.30.54.20">
    <property type="match status" value="1"/>
</dbReference>
<dbReference type="Gene3D" id="3.40.50.800">
    <property type="entry name" value="Anticodon-binding domain"/>
    <property type="match status" value="1"/>
</dbReference>
<dbReference type="Gene3D" id="3.30.930.10">
    <property type="entry name" value="Bira Bifunctional Protein, Domain 2"/>
    <property type="match status" value="1"/>
</dbReference>
<dbReference type="Gene3D" id="3.30.980.10">
    <property type="entry name" value="Threonyl-trna Synthetase, Chain A, domain 2"/>
    <property type="match status" value="1"/>
</dbReference>
<dbReference type="HAMAP" id="MF_00184">
    <property type="entry name" value="Thr_tRNA_synth"/>
    <property type="match status" value="1"/>
</dbReference>
<dbReference type="InterPro" id="IPR002314">
    <property type="entry name" value="aa-tRNA-synt_IIb"/>
</dbReference>
<dbReference type="InterPro" id="IPR006195">
    <property type="entry name" value="aa-tRNA-synth_II"/>
</dbReference>
<dbReference type="InterPro" id="IPR045864">
    <property type="entry name" value="aa-tRNA-synth_II/BPL/LPL"/>
</dbReference>
<dbReference type="InterPro" id="IPR004154">
    <property type="entry name" value="Anticodon-bd"/>
</dbReference>
<dbReference type="InterPro" id="IPR036621">
    <property type="entry name" value="Anticodon-bd_dom_sf"/>
</dbReference>
<dbReference type="InterPro" id="IPR004095">
    <property type="entry name" value="TGS"/>
</dbReference>
<dbReference type="InterPro" id="IPR002320">
    <property type="entry name" value="Thr-tRNA-ligase_IIa"/>
</dbReference>
<dbReference type="InterPro" id="IPR018163">
    <property type="entry name" value="Thr/Ala-tRNA-synth_IIc_edit"/>
</dbReference>
<dbReference type="InterPro" id="IPR047246">
    <property type="entry name" value="ThrRS_anticodon"/>
</dbReference>
<dbReference type="InterPro" id="IPR033728">
    <property type="entry name" value="ThrRS_core"/>
</dbReference>
<dbReference type="InterPro" id="IPR012947">
    <property type="entry name" value="tRNA_SAD"/>
</dbReference>
<dbReference type="NCBIfam" id="TIGR00418">
    <property type="entry name" value="thrS"/>
    <property type="match status" value="1"/>
</dbReference>
<dbReference type="PANTHER" id="PTHR11451:SF44">
    <property type="entry name" value="THREONINE--TRNA LIGASE, CHLOROPLASTIC_MITOCHONDRIAL 2"/>
    <property type="match status" value="1"/>
</dbReference>
<dbReference type="PANTHER" id="PTHR11451">
    <property type="entry name" value="THREONINE-TRNA LIGASE"/>
    <property type="match status" value="1"/>
</dbReference>
<dbReference type="Pfam" id="PF03129">
    <property type="entry name" value="HGTP_anticodon"/>
    <property type="match status" value="1"/>
</dbReference>
<dbReference type="Pfam" id="PF00587">
    <property type="entry name" value="tRNA-synt_2b"/>
    <property type="match status" value="1"/>
</dbReference>
<dbReference type="Pfam" id="PF07973">
    <property type="entry name" value="tRNA_SAD"/>
    <property type="match status" value="1"/>
</dbReference>
<dbReference type="PRINTS" id="PR01047">
    <property type="entry name" value="TRNASYNTHTHR"/>
</dbReference>
<dbReference type="SMART" id="SM00863">
    <property type="entry name" value="tRNA_SAD"/>
    <property type="match status" value="1"/>
</dbReference>
<dbReference type="SUPFAM" id="SSF52954">
    <property type="entry name" value="Class II aaRS ABD-related"/>
    <property type="match status" value="1"/>
</dbReference>
<dbReference type="SUPFAM" id="SSF55681">
    <property type="entry name" value="Class II aaRS and biotin synthetases"/>
    <property type="match status" value="1"/>
</dbReference>
<dbReference type="SUPFAM" id="SSF55186">
    <property type="entry name" value="ThrRS/AlaRS common domain"/>
    <property type="match status" value="1"/>
</dbReference>
<dbReference type="PROSITE" id="PS50862">
    <property type="entry name" value="AA_TRNA_LIGASE_II"/>
    <property type="match status" value="1"/>
</dbReference>
<dbReference type="PROSITE" id="PS51880">
    <property type="entry name" value="TGS"/>
    <property type="match status" value="1"/>
</dbReference>
<comment type="function">
    <text evidence="1">Catalyzes the attachment of threonine to tRNA(Thr) in a two-step reaction: L-threonine is first activated by ATP to form Thr-AMP and then transferred to the acceptor end of tRNA(Thr). Also edits incorrectly charged L-seryl-tRNA(Thr).</text>
</comment>
<comment type="catalytic activity">
    <reaction evidence="1">
        <text>tRNA(Thr) + L-threonine + ATP = L-threonyl-tRNA(Thr) + AMP + diphosphate + H(+)</text>
        <dbReference type="Rhea" id="RHEA:24624"/>
        <dbReference type="Rhea" id="RHEA-COMP:9670"/>
        <dbReference type="Rhea" id="RHEA-COMP:9704"/>
        <dbReference type="ChEBI" id="CHEBI:15378"/>
        <dbReference type="ChEBI" id="CHEBI:30616"/>
        <dbReference type="ChEBI" id="CHEBI:33019"/>
        <dbReference type="ChEBI" id="CHEBI:57926"/>
        <dbReference type="ChEBI" id="CHEBI:78442"/>
        <dbReference type="ChEBI" id="CHEBI:78534"/>
        <dbReference type="ChEBI" id="CHEBI:456215"/>
        <dbReference type="EC" id="6.1.1.3"/>
    </reaction>
</comment>
<comment type="cofactor">
    <cofactor evidence="1">
        <name>Zn(2+)</name>
        <dbReference type="ChEBI" id="CHEBI:29105"/>
    </cofactor>
    <text evidence="1">Binds 1 zinc ion per subunit.</text>
</comment>
<comment type="subunit">
    <text evidence="1">Homodimer.</text>
</comment>
<comment type="subcellular location">
    <subcellularLocation>
        <location evidence="1">Cytoplasm</location>
    </subcellularLocation>
</comment>
<comment type="similarity">
    <text evidence="1">Belongs to the class-II aminoacyl-tRNA synthetase family.</text>
</comment>